<organism>
    <name type="scientific">Yersinia enterocolitica</name>
    <dbReference type="NCBI Taxonomy" id="630"/>
    <lineage>
        <taxon>Bacteria</taxon>
        <taxon>Pseudomonadati</taxon>
        <taxon>Pseudomonadota</taxon>
        <taxon>Gammaproteobacteria</taxon>
        <taxon>Enterobacterales</taxon>
        <taxon>Yersiniaceae</taxon>
        <taxon>Yersinia</taxon>
    </lineage>
</organism>
<reference key="1">
    <citation type="journal article" date="1993" name="Mol. Microbiol.">
        <title>The Myf fibrillae of Yersinia enterocolitica.</title>
        <authorList>
            <person name="Iriarte M."/>
            <person name="Vanooteghem J.-C."/>
            <person name="Delor I."/>
            <person name="Diaz R."/>
            <person name="Knutton S."/>
            <person name="Cornelis G.R."/>
        </authorList>
    </citation>
    <scope>NUCLEOTIDE SEQUENCE [GENOMIC DNA]</scope>
    <source>
        <strain>W1024 / Serotype O:9</strain>
    </source>
</reference>
<protein>
    <recommendedName>
        <fullName>Outer membrane usher protein MyfC</fullName>
    </recommendedName>
</protein>
<proteinExistence type="inferred from homology"/>
<comment type="function">
    <text>Involved in the export and assembly of the MyfA fimbrial subunit.</text>
</comment>
<comment type="subcellular location">
    <subcellularLocation>
        <location evidence="1">Cell outer membrane</location>
        <topology evidence="1">Multi-pass membrane protein</topology>
    </subcellularLocation>
</comment>
<comment type="similarity">
    <text evidence="3">Belongs to the fimbrial export usher family.</text>
</comment>
<gene>
    <name type="primary">myfC</name>
</gene>
<feature type="signal peptide" evidence="2">
    <location>
        <begin position="1"/>
        <end position="26"/>
    </location>
</feature>
<feature type="chain" id="PRO_0000009322" description="Outer membrane usher protein MyfC">
    <location>
        <begin position="27"/>
        <end position="841"/>
    </location>
</feature>
<feature type="disulfide bond" evidence="2">
    <location>
        <begin position="817"/>
        <end position="840"/>
    </location>
</feature>
<evidence type="ECO:0000250" key="1"/>
<evidence type="ECO:0000255" key="2"/>
<evidence type="ECO:0000305" key="3"/>
<accession>P33408</accession>
<sequence length="841" mass="93414">MFFSLKNSVAKLIAFWAICLVLPVWAGHYTFDPILLANNNINANANTDLSLFEQGGQLPGTYQVDIFLGDEKMDSTNVTFHAVKSPTGEYSLQSCLTKEQLSRYGVDVDNYPELLPPEKNIQQDKQASQCVNLAAIPQASEEFEFYAMRLVLNIPQVALRPKDEIPVERWDDGITAFLLNYMANSSTTTYRQTGEQQSSHYVQLYPGFNIGAWRIRNATSWNQSGNSAGKWQSSYIYATRGLYRLKSRVTLGQSYTPGDFFDSVPFSGVMLGDDDNMLPSSQRDFIPVVRGIARSQARVEVRQNGYLLYSTVVSPGPFELTDILPSHSNGDLHVTVLESNGTTQQFTVPYSVPAIRLRKGRLRYNLMAGRYRPANVDVETTPIAQATVAYGLPWNLTAFVGGQWSPHYQATTAGMGVMLGDYGALSSSITQATSEYRQQQPVKGQVWEVRYNKTLQASDTSFSVVNSQYSTADFSNLSDVLQSYRRHDYSRRDWHSNSLRNQTHVVVGQPLGQFGYLNLNWSRQNYRDAPASSSWGVQYSFNIGNLYCSLDWTQNQYRGNQDRLLSLSVSMPLGRERDTYAAYRMTSSDNSKDHEMSLYGHAFDNRLSWNVRQTERYAQFHSGENSGSLGLDWQGSYGDIGGNYYYTPTIRQFSANVSGGAVIHRHGLTLGPQINGTAALVEVPGVSGVSTSEDHRLKTDFRGYSIVPNIFPYEEHDILLETTDLPPDAEVTKTDAKVLPTEGAIVRASFSPQIGARALMTITRNNGETIPFGAMASLVNQPANAAIVDEGGKAYLTGLPETGQLLVQWGRGASQQCRVDYQLANAKKGDAGLYMLSGVCH</sequence>
<dbReference type="EMBL" id="Z21953">
    <property type="protein sequence ID" value="CAA79953.1"/>
    <property type="molecule type" value="Genomic_DNA"/>
</dbReference>
<dbReference type="PIR" id="S39365">
    <property type="entry name" value="S39365"/>
</dbReference>
<dbReference type="SMR" id="P33408"/>
<dbReference type="GO" id="GO:0009279">
    <property type="term" value="C:cell outer membrane"/>
    <property type="evidence" value="ECO:0007669"/>
    <property type="project" value="UniProtKB-SubCell"/>
</dbReference>
<dbReference type="GO" id="GO:0015473">
    <property type="term" value="F:fimbrial usher porin activity"/>
    <property type="evidence" value="ECO:0007669"/>
    <property type="project" value="InterPro"/>
</dbReference>
<dbReference type="GO" id="GO:0009297">
    <property type="term" value="P:pilus assembly"/>
    <property type="evidence" value="ECO:0007669"/>
    <property type="project" value="InterPro"/>
</dbReference>
<dbReference type="FunFam" id="3.10.20.410:FF:000001">
    <property type="entry name" value="Fimbrial outer membrane usher protein"/>
    <property type="match status" value="1"/>
</dbReference>
<dbReference type="FunFam" id="2.60.40.3110:FF:000001">
    <property type="entry name" value="Putative fimbrial outer membrane usher"/>
    <property type="match status" value="1"/>
</dbReference>
<dbReference type="Gene3D" id="2.60.40.2070">
    <property type="match status" value="1"/>
</dbReference>
<dbReference type="Gene3D" id="2.60.40.3110">
    <property type="match status" value="1"/>
</dbReference>
<dbReference type="Gene3D" id="3.10.20.410">
    <property type="match status" value="1"/>
</dbReference>
<dbReference type="Gene3D" id="2.60.40.2610">
    <property type="entry name" value="Outer membrane usher protein FimD, plug domain"/>
    <property type="match status" value="1"/>
</dbReference>
<dbReference type="InterPro" id="IPR000015">
    <property type="entry name" value="Fimb_usher"/>
</dbReference>
<dbReference type="InterPro" id="IPR018030">
    <property type="entry name" value="Fimbrial_membr_usher_CS"/>
</dbReference>
<dbReference type="InterPro" id="IPR042186">
    <property type="entry name" value="FimD_plug_dom"/>
</dbReference>
<dbReference type="InterPro" id="IPR025949">
    <property type="entry name" value="PapC-like_C"/>
</dbReference>
<dbReference type="InterPro" id="IPR043142">
    <property type="entry name" value="PapC-like_C_sf"/>
</dbReference>
<dbReference type="InterPro" id="IPR025885">
    <property type="entry name" value="PapC_N"/>
</dbReference>
<dbReference type="InterPro" id="IPR037224">
    <property type="entry name" value="PapC_N_sf"/>
</dbReference>
<dbReference type="PANTHER" id="PTHR30451:SF9">
    <property type="entry name" value="F1 CAPSULE-ANCHORING PROTEIN"/>
    <property type="match status" value="1"/>
</dbReference>
<dbReference type="PANTHER" id="PTHR30451">
    <property type="entry name" value="OUTER MEMBRANE USHER PROTEIN"/>
    <property type="match status" value="1"/>
</dbReference>
<dbReference type="Pfam" id="PF13953">
    <property type="entry name" value="PapC_C"/>
    <property type="match status" value="1"/>
</dbReference>
<dbReference type="Pfam" id="PF13954">
    <property type="entry name" value="PapC_N"/>
    <property type="match status" value="1"/>
</dbReference>
<dbReference type="Pfam" id="PF00577">
    <property type="entry name" value="Usher"/>
    <property type="match status" value="1"/>
</dbReference>
<dbReference type="SUPFAM" id="SSF141729">
    <property type="entry name" value="FimD N-terminal domain-like"/>
    <property type="match status" value="1"/>
</dbReference>
<dbReference type="PROSITE" id="PS01151">
    <property type="entry name" value="FIMBRIAL_USHER"/>
    <property type="match status" value="1"/>
</dbReference>
<keyword id="KW-0998">Cell outer membrane</keyword>
<keyword id="KW-1015">Disulfide bond</keyword>
<keyword id="KW-1029">Fimbrium biogenesis</keyword>
<keyword id="KW-0472">Membrane</keyword>
<keyword id="KW-0732">Signal</keyword>
<keyword id="KW-0812">Transmembrane</keyword>
<keyword id="KW-1134">Transmembrane beta strand</keyword>
<keyword id="KW-0813">Transport</keyword>
<name>MYFC_YEREN</name>